<dbReference type="EMBL" id="U43281">
    <property type="protein sequence ID" value="AAB68199.1"/>
    <property type="molecule type" value="Genomic_DNA"/>
</dbReference>
<dbReference type="EMBL" id="BK006949">
    <property type="protein sequence ID" value="DAA11332.1"/>
    <property type="molecule type" value="Genomic_DNA"/>
</dbReference>
<dbReference type="PIR" id="S61966">
    <property type="entry name" value="S61966"/>
</dbReference>
<dbReference type="RefSeq" id="NP_015225.1">
    <property type="nucleotide sequence ID" value="NM_001183914.1"/>
</dbReference>
<dbReference type="SMR" id="Q02887"/>
<dbReference type="BioGRID" id="36080">
    <property type="interactions" value="146"/>
</dbReference>
<dbReference type="FunCoup" id="Q02887">
    <property type="interactions" value="29"/>
</dbReference>
<dbReference type="IntAct" id="Q02887">
    <property type="interactions" value="4"/>
</dbReference>
<dbReference type="MINT" id="Q02887"/>
<dbReference type="STRING" id="4932.YPL100W"/>
<dbReference type="iPTMnet" id="Q02887"/>
<dbReference type="PaxDb" id="4932-YPL100W"/>
<dbReference type="PeptideAtlas" id="Q02887"/>
<dbReference type="EnsemblFungi" id="YPL100W_mRNA">
    <property type="protein sequence ID" value="YPL100W"/>
    <property type="gene ID" value="YPL100W"/>
</dbReference>
<dbReference type="GeneID" id="856004"/>
<dbReference type="KEGG" id="sce:YPL100W"/>
<dbReference type="AGR" id="SGD:S000006021"/>
<dbReference type="SGD" id="S000006021">
    <property type="gene designation" value="ATG21"/>
</dbReference>
<dbReference type="VEuPathDB" id="FungiDB:YPL100W"/>
<dbReference type="eggNOG" id="KOG2110">
    <property type="taxonomic scope" value="Eukaryota"/>
</dbReference>
<dbReference type="HOGENOM" id="CLU_025895_5_2_1"/>
<dbReference type="InParanoid" id="Q02887"/>
<dbReference type="OMA" id="MNRKRMC"/>
<dbReference type="OrthoDB" id="1667587at2759"/>
<dbReference type="BioCyc" id="YEAST:G3O-34003-MONOMER"/>
<dbReference type="Reactome" id="R-SCE-1632852">
    <property type="pathway name" value="Macroautophagy"/>
</dbReference>
<dbReference type="BioGRID-ORCS" id="856004">
    <property type="hits" value="0 hits in 10 CRISPR screens"/>
</dbReference>
<dbReference type="PRO" id="PR:Q02887"/>
<dbReference type="Proteomes" id="UP000002311">
    <property type="component" value="Chromosome XVI"/>
</dbReference>
<dbReference type="RNAct" id="Q02887">
    <property type="molecule type" value="protein"/>
</dbReference>
<dbReference type="GO" id="GO:0005829">
    <property type="term" value="C:cytosol"/>
    <property type="evidence" value="ECO:0000314"/>
    <property type="project" value="SGD"/>
</dbReference>
<dbReference type="GO" id="GO:0005768">
    <property type="term" value="C:endosome"/>
    <property type="evidence" value="ECO:0000314"/>
    <property type="project" value="SGD"/>
</dbReference>
<dbReference type="GO" id="GO:0000329">
    <property type="term" value="C:fungal-type vacuole membrane"/>
    <property type="evidence" value="ECO:0000314"/>
    <property type="project" value="SGD"/>
</dbReference>
<dbReference type="GO" id="GO:0000407">
    <property type="term" value="C:phagophore assembly site"/>
    <property type="evidence" value="ECO:0000314"/>
    <property type="project" value="SGD"/>
</dbReference>
<dbReference type="GO" id="GO:0034045">
    <property type="term" value="C:phagophore assembly site membrane"/>
    <property type="evidence" value="ECO:0000318"/>
    <property type="project" value="GO_Central"/>
</dbReference>
<dbReference type="GO" id="GO:0080025">
    <property type="term" value="F:phosphatidylinositol-3,5-bisphosphate binding"/>
    <property type="evidence" value="ECO:0000314"/>
    <property type="project" value="SGD"/>
</dbReference>
<dbReference type="GO" id="GO:0032266">
    <property type="term" value="F:phosphatidylinositol-3-phosphate binding"/>
    <property type="evidence" value="ECO:0000314"/>
    <property type="project" value="SGD"/>
</dbReference>
<dbReference type="GO" id="GO:0070273">
    <property type="term" value="F:phosphatidylinositol-4-phosphate binding"/>
    <property type="evidence" value="ECO:0000314"/>
    <property type="project" value="SGD"/>
</dbReference>
<dbReference type="GO" id="GO:0030674">
    <property type="term" value="F:protein-macromolecule adaptor activity"/>
    <property type="evidence" value="ECO:0000318"/>
    <property type="project" value="GO_Central"/>
</dbReference>
<dbReference type="GO" id="GO:0000422">
    <property type="term" value="P:autophagy of mitochondrion"/>
    <property type="evidence" value="ECO:0000315"/>
    <property type="project" value="SGD"/>
</dbReference>
<dbReference type="GO" id="GO:0032258">
    <property type="term" value="P:cytoplasm to vacuole targeting by the Cvt pathway"/>
    <property type="evidence" value="ECO:0000315"/>
    <property type="project" value="SGD"/>
</dbReference>
<dbReference type="GO" id="GO:0061723">
    <property type="term" value="P:glycophagy"/>
    <property type="evidence" value="ECO:0000318"/>
    <property type="project" value="GO_Central"/>
</dbReference>
<dbReference type="GO" id="GO:0016236">
    <property type="term" value="P:macroautophagy"/>
    <property type="evidence" value="ECO:0000315"/>
    <property type="project" value="SGD"/>
</dbReference>
<dbReference type="GO" id="GO:0044804">
    <property type="term" value="P:nucleophagy"/>
    <property type="evidence" value="ECO:0000318"/>
    <property type="project" value="GO_Central"/>
</dbReference>
<dbReference type="GO" id="GO:0000425">
    <property type="term" value="P:pexophagy"/>
    <property type="evidence" value="ECO:0000318"/>
    <property type="project" value="GO_Central"/>
</dbReference>
<dbReference type="GO" id="GO:0034727">
    <property type="term" value="P:piecemeal microautophagy of the nucleus"/>
    <property type="evidence" value="ECO:0000315"/>
    <property type="project" value="SGD"/>
</dbReference>
<dbReference type="GO" id="GO:0034497">
    <property type="term" value="P:protein localization to phagophore assembly site"/>
    <property type="evidence" value="ECO:0000315"/>
    <property type="project" value="SGD"/>
</dbReference>
<dbReference type="GO" id="GO:0016050">
    <property type="term" value="P:vesicle organization"/>
    <property type="evidence" value="ECO:0000315"/>
    <property type="project" value="SGD"/>
</dbReference>
<dbReference type="Gene3D" id="2.130.10.10">
    <property type="entry name" value="YVTN repeat-like/Quinoprotein amine dehydrogenase"/>
    <property type="match status" value="1"/>
</dbReference>
<dbReference type="InterPro" id="IPR048720">
    <property type="entry name" value="PROPPIN"/>
</dbReference>
<dbReference type="InterPro" id="IPR015943">
    <property type="entry name" value="WD40/YVTN_repeat-like_dom_sf"/>
</dbReference>
<dbReference type="InterPro" id="IPR036322">
    <property type="entry name" value="WD40_repeat_dom_sf"/>
</dbReference>
<dbReference type="InterPro" id="IPR001680">
    <property type="entry name" value="WD40_rpt"/>
</dbReference>
<dbReference type="PANTHER" id="PTHR11227">
    <property type="entry name" value="WD-REPEAT PROTEIN INTERACTING WITH PHOSPHOINOSIDES WIPI -RELATED"/>
    <property type="match status" value="1"/>
</dbReference>
<dbReference type="Pfam" id="PF21032">
    <property type="entry name" value="PROPPIN"/>
    <property type="match status" value="1"/>
</dbReference>
<dbReference type="SMART" id="SM00320">
    <property type="entry name" value="WD40"/>
    <property type="match status" value="3"/>
</dbReference>
<dbReference type="SUPFAM" id="SSF50978">
    <property type="entry name" value="WD40 repeat-like"/>
    <property type="match status" value="1"/>
</dbReference>
<accession>Q02887</accession>
<accession>D6W3R6</accession>
<proteinExistence type="evidence at protein level"/>
<evidence type="ECO:0000256" key="1">
    <source>
        <dbReference type="SAM" id="MobiDB-lite"/>
    </source>
</evidence>
<evidence type="ECO:0000269" key="2">
    <source>
    </source>
</evidence>
<evidence type="ECO:0000269" key="3">
    <source>
    </source>
</evidence>
<evidence type="ECO:0000269" key="4">
    <source>
    </source>
</evidence>
<evidence type="ECO:0000269" key="5">
    <source>
    </source>
</evidence>
<evidence type="ECO:0000269" key="6">
    <source>
    </source>
</evidence>
<evidence type="ECO:0000269" key="7">
    <source>
    </source>
</evidence>
<evidence type="ECO:0000269" key="8">
    <source>
    </source>
</evidence>
<evidence type="ECO:0000269" key="9">
    <source>
    </source>
</evidence>
<evidence type="ECO:0000269" key="10">
    <source>
    </source>
</evidence>
<evidence type="ECO:0000269" key="11">
    <source>
    </source>
</evidence>
<evidence type="ECO:0000305" key="12"/>
<evidence type="ECO:0007744" key="13">
    <source>
    </source>
</evidence>
<evidence type="ECO:0007744" key="14">
    <source>
    </source>
</evidence>
<name>ATG21_YEAST</name>
<sequence length="496" mass="55188">MKVLQFNQDATCCVVAASSHQISIFNCDPFGKCFEIDTKNSKKKTSNNNGSASNSESRNNEESILITNGSRDRTDAEEEEDNEDNALVTGNILKEGEFVIEMLFSTSLIAIADRGQGLNKGKKLKIVNTKRKCTICEIVFPHEIVDVVMNRKRMCVLLESDQIFIYDISCMKPLETIDLWEDHYKRSQANSFSNASNTGTLEGDSANLNRVATNLLANATQKSVNGSNPSVRTRRNSLRSKIRPRMVLSNDDRSILCFTAYSSPKKNKPNSEALYDVVIYDTLNVTPVNYLNSVHKGNVACLAVSHDGKLLATASDKGTIIRVFHTGVDSDYMSSRSLFKEFRRGTRLCNLYQLAFDKSMTMIGCVGDTDTIHLFKLDDASNSLPGDNSSNGHWNEEEYILASNSNPSMGTPKEIPLSKPRIANYFSKKIKSSIPNQNLSRNFAYITVNESNRSCLGFPDEFPNQVYIASDDGTFSIYSIPSKPGECVLTKNNKFT</sequence>
<reference key="1">
    <citation type="journal article" date="1997" name="Nature">
        <title>The nucleotide sequence of Saccharomyces cerevisiae chromosome XVI.</title>
        <authorList>
            <person name="Bussey H."/>
            <person name="Storms R.K."/>
            <person name="Ahmed A."/>
            <person name="Albermann K."/>
            <person name="Allen E."/>
            <person name="Ansorge W."/>
            <person name="Araujo R."/>
            <person name="Aparicio A."/>
            <person name="Barrell B.G."/>
            <person name="Badcock K."/>
            <person name="Benes V."/>
            <person name="Botstein D."/>
            <person name="Bowman S."/>
            <person name="Brueckner M."/>
            <person name="Carpenter J."/>
            <person name="Cherry J.M."/>
            <person name="Chung E."/>
            <person name="Churcher C.M."/>
            <person name="Coster F."/>
            <person name="Davis K."/>
            <person name="Davis R.W."/>
            <person name="Dietrich F.S."/>
            <person name="Delius H."/>
            <person name="DiPaolo T."/>
            <person name="Dubois E."/>
            <person name="Duesterhoeft A."/>
            <person name="Duncan M."/>
            <person name="Floeth M."/>
            <person name="Fortin N."/>
            <person name="Friesen J.D."/>
            <person name="Fritz C."/>
            <person name="Goffeau A."/>
            <person name="Hall J."/>
            <person name="Hebling U."/>
            <person name="Heumann K."/>
            <person name="Hilbert H."/>
            <person name="Hillier L.W."/>
            <person name="Hunicke-Smith S."/>
            <person name="Hyman R.W."/>
            <person name="Johnston M."/>
            <person name="Kalman S."/>
            <person name="Kleine K."/>
            <person name="Komp C."/>
            <person name="Kurdi O."/>
            <person name="Lashkari D."/>
            <person name="Lew H."/>
            <person name="Lin A."/>
            <person name="Lin D."/>
            <person name="Louis E.J."/>
            <person name="Marathe R."/>
            <person name="Messenguy F."/>
            <person name="Mewes H.-W."/>
            <person name="Mirtipati S."/>
            <person name="Moestl D."/>
            <person name="Mueller-Auer S."/>
            <person name="Namath A."/>
            <person name="Nentwich U."/>
            <person name="Oefner P."/>
            <person name="Pearson D."/>
            <person name="Petel F.X."/>
            <person name="Pohl T.M."/>
            <person name="Purnelle B."/>
            <person name="Rajandream M.A."/>
            <person name="Rechmann S."/>
            <person name="Rieger M."/>
            <person name="Riles L."/>
            <person name="Roberts D."/>
            <person name="Schaefer M."/>
            <person name="Scharfe M."/>
            <person name="Scherens B."/>
            <person name="Schramm S."/>
            <person name="Schroeder M."/>
            <person name="Sdicu A.-M."/>
            <person name="Tettelin H."/>
            <person name="Urrestarazu L.A."/>
            <person name="Ushinsky S."/>
            <person name="Vierendeels F."/>
            <person name="Vissers S."/>
            <person name="Voss H."/>
            <person name="Walsh S.V."/>
            <person name="Wambutt R."/>
            <person name="Wang Y."/>
            <person name="Wedler E."/>
            <person name="Wedler H."/>
            <person name="Winnett E."/>
            <person name="Zhong W.-W."/>
            <person name="Zollner A."/>
            <person name="Vo D.H."/>
            <person name="Hani J."/>
        </authorList>
    </citation>
    <scope>NUCLEOTIDE SEQUENCE [LARGE SCALE GENOMIC DNA]</scope>
    <source>
        <strain>ATCC 204508 / S288c</strain>
    </source>
</reference>
<reference key="2">
    <citation type="journal article" date="2014" name="G3 (Bethesda)">
        <title>The reference genome sequence of Saccharomyces cerevisiae: Then and now.</title>
        <authorList>
            <person name="Engel S.R."/>
            <person name="Dietrich F.S."/>
            <person name="Fisk D.G."/>
            <person name="Binkley G."/>
            <person name="Balakrishnan R."/>
            <person name="Costanzo M.C."/>
            <person name="Dwight S.S."/>
            <person name="Hitz B.C."/>
            <person name="Karra K."/>
            <person name="Nash R.S."/>
            <person name="Weng S."/>
            <person name="Wong E.D."/>
            <person name="Lloyd P."/>
            <person name="Skrzypek M.S."/>
            <person name="Miyasato S.R."/>
            <person name="Simison M."/>
            <person name="Cherry J.M."/>
        </authorList>
    </citation>
    <scope>GENOME REANNOTATION</scope>
    <source>
        <strain>ATCC 204508 / S288c</strain>
    </source>
</reference>
<reference key="3">
    <citation type="journal article" date="2001" name="Yeast">
        <title>Functional analysis of the Saccharomyces cerevisiae YFR021w/YGR223c/YPL100w ORF family suggests relations to mitochondrial/peroxisomal functions and amino acid signalling pathways.</title>
        <authorList>
            <person name="Georgakopoulos T."/>
            <person name="Koutroubas G."/>
            <person name="Vakonakis I."/>
            <person name="Tzermia M."/>
            <person name="Prokova V."/>
            <person name="Voutsina A."/>
            <person name="Alexandraki D."/>
        </authorList>
    </citation>
    <scope>FUNCTION</scope>
</reference>
<reference key="4">
    <citation type="journal article" date="2002" name="FEBS Lett.">
        <title>Mai1p is essential for maturation of proaminopeptidase I but not for autophagy.</title>
        <authorList>
            <person name="Barth H."/>
            <person name="Meiling-Wesse K."/>
            <person name="Epple U.D."/>
            <person name="Thumm M."/>
        </authorList>
    </citation>
    <scope>FUNCTION</scope>
    <scope>SUBCELLULAR LOCATION</scope>
</reference>
<reference key="5">
    <citation type="journal article" date="2003" name="Dev. Cell">
        <title>A unified nomenclature for yeast autophagy-related genes.</title>
        <authorList>
            <person name="Klionsky D.J."/>
            <person name="Cregg J.M."/>
            <person name="Dunn W.A. Jr."/>
            <person name="Emr S.D."/>
            <person name="Sakai Y."/>
            <person name="Sandoval I.V."/>
            <person name="Sibirny A."/>
            <person name="Subramani S."/>
            <person name="Thumm M."/>
            <person name="Veenhuis M."/>
            <person name="Ohsumi Y."/>
        </authorList>
    </citation>
    <scope>NOMENCLATURE</scope>
</reference>
<reference key="6">
    <citation type="journal article" date="2003" name="Nature">
        <title>Global analysis of protein localization in budding yeast.</title>
        <authorList>
            <person name="Huh W.-K."/>
            <person name="Falvo J.V."/>
            <person name="Gerke L.C."/>
            <person name="Carroll A.S."/>
            <person name="Howson R.W."/>
            <person name="Weissman J.S."/>
            <person name="O'Shea E.K."/>
        </authorList>
    </citation>
    <scope>SUBCELLULAR LOCATION [LARGE SCALE ANALYSIS]</scope>
</reference>
<reference key="7">
    <citation type="journal article" date="2003" name="Nature">
        <title>Global analysis of protein expression in yeast.</title>
        <authorList>
            <person name="Ghaemmaghami S."/>
            <person name="Huh W.-K."/>
            <person name="Bower K."/>
            <person name="Howson R.W."/>
            <person name="Belle A."/>
            <person name="Dephoure N."/>
            <person name="O'Shea E.K."/>
            <person name="Weissman J.S."/>
        </authorList>
    </citation>
    <scope>LEVEL OF PROTEIN EXPRESSION [LARGE SCALE ANALYSIS]</scope>
</reference>
<reference key="8">
    <citation type="journal article" date="2004" name="EMBO J.">
        <title>Svp1p defines a family of phosphatidylinositol 3,5-bisphosphate effectors.</title>
        <authorList>
            <person name="Dove S.K."/>
            <person name="Piper R.C."/>
            <person name="McEwen R.K."/>
            <person name="Yu J.W."/>
            <person name="King M.C."/>
            <person name="Hughes D.C."/>
            <person name="Thuring J."/>
            <person name="Holmes A.B."/>
            <person name="Cooke F.T."/>
            <person name="Michell R.H."/>
            <person name="Parker P.J."/>
            <person name="Lemmon M.A."/>
        </authorList>
    </citation>
    <scope>INTERACTION WITH PIP2</scope>
    <scope>SUBCELLULAR LOCATION</scope>
</reference>
<reference key="9">
    <citation type="journal article" date="2004" name="J. Biol. Chem.">
        <title>Atg21 is required for effective recruitment of Atg8 to the preautophagosomal structure during the Cvt pathway.</title>
        <authorList>
            <person name="Meiling-Wesse K."/>
            <person name="Barth H."/>
            <person name="Voss C."/>
            <person name="Eskelinen E.-L."/>
            <person name="Epple U.D."/>
            <person name="Thumm M."/>
        </authorList>
    </citation>
    <scope>FUNCTION</scope>
    <scope>SUBCELLULAR LOCATION</scope>
</reference>
<reference key="10">
    <citation type="journal article" date="2004" name="Mol. Biol. Cell">
        <title>Atg21 is a phosphoinositide binding protein required for efficient lipidation and localization of Atg8 during uptake of aminopeptidase I by selective autophagy.</title>
        <authorList>
            <person name="Stromhaug P.E."/>
            <person name="Reggiori F."/>
            <person name="Guan J."/>
            <person name="Wang C.-W."/>
            <person name="Klionsky D.J."/>
        </authorList>
    </citation>
    <scope>FUNCTION</scope>
    <scope>SUBCELLULAR LOCATION</scope>
    <scope>MUTAGENESIS OF 343-ARG-ARG-344</scope>
</reference>
<reference key="11">
    <citation type="journal article" date="2006" name="FEBS Lett.">
        <title>The relevance of the phosphatidylinositolphosphat-binding motif FRRGT of Atg18 and Atg21 for the Cvt pathway and autophagy.</title>
        <authorList>
            <person name="Krick R."/>
            <person name="Tolstrup J."/>
            <person name="Appelles A."/>
            <person name="Henke S."/>
            <person name="Thumm M."/>
        </authorList>
    </citation>
    <scope>FUNCTION</scope>
    <scope>SUBCELLULAR LOCATION</scope>
    <scope>DOMAIN</scope>
</reference>
<reference key="12">
    <citation type="journal article" date="2007" name="Proc. Natl. Acad. Sci. U.S.A.">
        <title>Analysis of phosphorylation sites on proteins from Saccharomyces cerevisiae by electron transfer dissociation (ETD) mass spectrometry.</title>
        <authorList>
            <person name="Chi A."/>
            <person name="Huttenhower C."/>
            <person name="Geer L.Y."/>
            <person name="Coon J.J."/>
            <person name="Syka J.E.P."/>
            <person name="Bai D.L."/>
            <person name="Shabanowitz J."/>
            <person name="Burke D.J."/>
            <person name="Troyanskaya O.G."/>
            <person name="Hunt D.F."/>
        </authorList>
    </citation>
    <scope>PHOSPHORYLATION [LARGE SCALE ANALYSIS] AT SER-237</scope>
    <scope>IDENTIFICATION BY MASS SPECTROMETRY [LARGE SCALE ANALYSIS]</scope>
</reference>
<reference key="13">
    <citation type="journal article" date="2008" name="Autophagy">
        <title>Dissecting the localization and function of Atg18, Atg21 and Ygr223c.</title>
        <authorList>
            <person name="Krick R."/>
            <person name="Henke S."/>
            <person name="Tolstrup J."/>
            <person name="Thumm M."/>
        </authorList>
    </citation>
    <scope>SUBCELLULAR LOCATION</scope>
    <scope>FUNCTION</scope>
</reference>
<reference key="14">
    <citation type="journal article" date="2008" name="Mol. Cell. Proteomics">
        <title>A multidimensional chromatography technology for in-depth phosphoproteome analysis.</title>
        <authorList>
            <person name="Albuquerque C.P."/>
            <person name="Smolka M.B."/>
            <person name="Payne S.H."/>
            <person name="Bafna V."/>
            <person name="Eng J."/>
            <person name="Zhou H."/>
        </authorList>
    </citation>
    <scope>IDENTIFICATION BY MASS SPECTROMETRY [LARGE SCALE ANALYSIS]</scope>
</reference>
<reference key="15">
    <citation type="journal article" date="2009" name="Mol. Biol. Cell">
        <title>A genomic screen for yeast mutants defective in selective mitochondria autophagy.</title>
        <authorList>
            <person name="Kanki T."/>
            <person name="Wang K."/>
            <person name="Baba M."/>
            <person name="Bartholomew C.R."/>
            <person name="Lynch-Day M.A."/>
            <person name="Du Z."/>
            <person name="Geng J."/>
            <person name="Mao K."/>
            <person name="Yang Z."/>
            <person name="Yen W.L."/>
            <person name="Klionsky D.J."/>
        </authorList>
    </citation>
    <scope>FUNCTION</scope>
</reference>
<reference key="16">
    <citation type="journal article" date="2009" name="Science">
        <title>Global analysis of Cdk1 substrate phosphorylation sites provides insights into evolution.</title>
        <authorList>
            <person name="Holt L.J."/>
            <person name="Tuch B.B."/>
            <person name="Villen J."/>
            <person name="Johnson A.D."/>
            <person name="Gygi S.P."/>
            <person name="Morgan D.O."/>
        </authorList>
    </citation>
    <scope>PHOSPHORYLATION [LARGE SCALE ANALYSIS] AT THR-213</scope>
    <scope>IDENTIFICATION BY MASS SPECTROMETRY [LARGE SCALE ANALYSIS]</scope>
</reference>
<reference key="17">
    <citation type="journal article" date="2010" name="J. Biol. Chem.">
        <title>Roles of the lipid-binding motifs of Atg18 and Atg21 in the cytoplasm to vacuole targeting pathway and autophagy.</title>
        <authorList>
            <person name="Nair U."/>
            <person name="Cao Y."/>
            <person name="Xie Z."/>
            <person name="Klionsky D.J."/>
        </authorList>
    </citation>
    <scope>FUNCTION</scope>
    <scope>DOMAIN</scope>
</reference>
<reference key="18">
    <citation type="journal article" date="2011" name="Autophagy">
        <title>GFP-Atg8 protease protection as a tool to monitor autophagosome biogenesis.</title>
        <authorList>
            <person name="Nair U."/>
            <person name="Thumm M."/>
            <person name="Klionsky D.J."/>
            <person name="Krick R."/>
        </authorList>
    </citation>
    <scope>FUNCTION</scope>
</reference>
<feature type="chain" id="PRO_0000050882" description="Autophagy-related protein 21">
    <location>
        <begin position="1"/>
        <end position="496"/>
    </location>
</feature>
<feature type="repeat" description="WD 1">
    <location>
        <begin position="294"/>
        <end position="334"/>
    </location>
</feature>
<feature type="repeat" description="WD 2">
    <location>
        <begin position="346"/>
        <end position="385"/>
    </location>
</feature>
<feature type="repeat" description="WD 3">
    <location>
        <begin position="448"/>
        <end position="488"/>
    </location>
</feature>
<feature type="region of interest" description="Disordered" evidence="1">
    <location>
        <begin position="41"/>
        <end position="86"/>
    </location>
</feature>
<feature type="short sequence motif" description="L/FRRG motif" evidence="5">
    <location>
        <begin position="342"/>
        <end position="346"/>
    </location>
</feature>
<feature type="compositionally biased region" description="Low complexity" evidence="1">
    <location>
        <begin position="46"/>
        <end position="57"/>
    </location>
</feature>
<feature type="compositionally biased region" description="Acidic residues" evidence="1">
    <location>
        <begin position="75"/>
        <end position="84"/>
    </location>
</feature>
<feature type="modified residue" description="Phosphothreonine" evidence="14">
    <location>
        <position position="213"/>
    </location>
</feature>
<feature type="modified residue" description="Phosphoserine" evidence="13">
    <location>
        <position position="237"/>
    </location>
</feature>
<feature type="mutagenesis site" description="Loss of aminopeptidase I precursor maturation and no more association with vacuole and punctate structures." evidence="5">
    <original>RR</original>
    <variation>KK</variation>
    <location>
        <begin position="343"/>
        <end position="344"/>
    </location>
</feature>
<organism>
    <name type="scientific">Saccharomyces cerevisiae (strain ATCC 204508 / S288c)</name>
    <name type="common">Baker's yeast</name>
    <dbReference type="NCBI Taxonomy" id="559292"/>
    <lineage>
        <taxon>Eukaryota</taxon>
        <taxon>Fungi</taxon>
        <taxon>Dikarya</taxon>
        <taxon>Ascomycota</taxon>
        <taxon>Saccharomycotina</taxon>
        <taxon>Saccharomycetes</taxon>
        <taxon>Saccharomycetales</taxon>
        <taxon>Saccharomycetaceae</taxon>
        <taxon>Saccharomyces</taxon>
    </lineage>
</organism>
<keyword id="KW-0072">Autophagy</keyword>
<keyword id="KW-0963">Cytoplasm</keyword>
<keyword id="KW-0597">Phosphoprotein</keyword>
<keyword id="KW-0653">Protein transport</keyword>
<keyword id="KW-1185">Reference proteome</keyword>
<keyword id="KW-0677">Repeat</keyword>
<keyword id="KW-0813">Transport</keyword>
<keyword id="KW-0926">Vacuole</keyword>
<keyword id="KW-0853">WD repeat</keyword>
<protein>
    <recommendedName>
        <fullName>Autophagy-related protein 21</fullName>
    </recommendedName>
    <alternativeName>
        <fullName>Cytoplasm to vacuole transport protein 21</fullName>
    </alternativeName>
    <alternativeName>
        <fullName>Homologous with SVP1 protein 1</fullName>
    </alternativeName>
    <alternativeName>
        <fullName>Maturation of proaminopeptidase I protein 1</fullName>
    </alternativeName>
</protein>
<gene>
    <name type="primary">ATG21</name>
    <name type="synonym">CVT21</name>
    <name type="synonym">HSV1</name>
    <name type="synonym">MAI1</name>
    <name type="ordered locus">YPL100W</name>
</gene>
<comment type="function">
    <text evidence="2 3 5 6 7 8 9 10 11">Required for cytoplasm to vacuole transport (Cvt) vesicles formation and mitophagy. Involved in binding of phosphatidylethanolamine to ATG8 and in recruitment of ATG8 and ATG5 to the pre-autophagosomal structure. Protects ATG8 from ARG4-mediated cleavage. Essential for maturation of proaminopeptidase I.</text>
</comment>
<comment type="subcellular location">
    <subcellularLocation>
        <location>Cytoplasm</location>
    </subcellularLocation>
    <subcellularLocation>
        <location>Vacuole</location>
    </subcellularLocation>
    <text>And perivacuolar punctate structures.</text>
</comment>
<comment type="domain">
    <text>Contains a beta-propeller domain involved in specific binding to phosphatidylinositol 3,5-bisphosphate (PIP2).</text>
</comment>
<comment type="domain">
    <text evidence="5">The L/FRRG motif is essential for the cytoplasm to vacuole transport (Cvt) pathway and for the recruitment of ATG8 and ATG16 to the PAS in nutrient-rich medium and in both its recruitment to and dissociation from the PAS under starvation conditions.</text>
</comment>
<comment type="miscellaneous">
    <text evidence="4">Present with 6020 molecules/cell in log phase SD medium.</text>
</comment>
<comment type="similarity">
    <text evidence="12">Belongs to the WD repeat PROPPIN family.</text>
</comment>